<name>AATA_METLZ</name>
<feature type="chain" id="PRO_0000322477" description="A-type ATP synthase subunit A">
    <location>
        <begin position="1"/>
        <end position="581"/>
    </location>
</feature>
<feature type="binding site" evidence="1">
    <location>
        <begin position="232"/>
        <end position="239"/>
    </location>
    <ligand>
        <name>ATP</name>
        <dbReference type="ChEBI" id="CHEBI:30616"/>
    </ligand>
</feature>
<keyword id="KW-0066">ATP synthesis</keyword>
<keyword id="KW-0067">ATP-binding</keyword>
<keyword id="KW-1003">Cell membrane</keyword>
<keyword id="KW-0375">Hydrogen ion transport</keyword>
<keyword id="KW-0406">Ion transport</keyword>
<keyword id="KW-0472">Membrane</keyword>
<keyword id="KW-0547">Nucleotide-binding</keyword>
<keyword id="KW-1185">Reference proteome</keyword>
<keyword id="KW-1278">Translocase</keyword>
<keyword id="KW-0813">Transport</keyword>
<proteinExistence type="inferred from homology"/>
<protein>
    <recommendedName>
        <fullName evidence="1">A-type ATP synthase subunit A</fullName>
        <ecNumber evidence="1">7.1.2.2</ecNumber>
    </recommendedName>
</protein>
<evidence type="ECO:0000255" key="1">
    <source>
        <dbReference type="HAMAP-Rule" id="MF_00309"/>
    </source>
</evidence>
<reference key="1">
    <citation type="journal article" date="2009" name="Stand. Genomic Sci.">
        <title>Complete genome sequence of Methanocorpusculum labreanum type strain Z.</title>
        <authorList>
            <person name="Anderson I.J."/>
            <person name="Sieprawska-Lupa M."/>
            <person name="Goltsman E."/>
            <person name="Lapidus A."/>
            <person name="Copeland A."/>
            <person name="Glavina Del Rio T."/>
            <person name="Tice H."/>
            <person name="Dalin E."/>
            <person name="Barry K."/>
            <person name="Pitluck S."/>
            <person name="Hauser L."/>
            <person name="Land M."/>
            <person name="Lucas S."/>
            <person name="Richardson P."/>
            <person name="Whitman W.B."/>
            <person name="Kyrpides N.C."/>
        </authorList>
    </citation>
    <scope>NUCLEOTIDE SEQUENCE [LARGE SCALE GENOMIC DNA]</scope>
    <source>
        <strain>ATCC 43576 / DSM 4855 / Z</strain>
    </source>
</reference>
<dbReference type="EC" id="7.1.2.2" evidence="1"/>
<dbReference type="EMBL" id="CP000559">
    <property type="protein sequence ID" value="ABN07391.1"/>
    <property type="molecule type" value="Genomic_DNA"/>
</dbReference>
<dbReference type="RefSeq" id="WP_011833594.1">
    <property type="nucleotide sequence ID" value="NC_008942.1"/>
</dbReference>
<dbReference type="SMR" id="A2SST5"/>
<dbReference type="STRING" id="410358.Mlab_1222"/>
<dbReference type="GeneID" id="4795787"/>
<dbReference type="KEGG" id="mla:Mlab_1222"/>
<dbReference type="eggNOG" id="arCOG00868">
    <property type="taxonomic scope" value="Archaea"/>
</dbReference>
<dbReference type="HOGENOM" id="CLU_008162_3_1_2"/>
<dbReference type="OrthoDB" id="115235at2157"/>
<dbReference type="Proteomes" id="UP000000365">
    <property type="component" value="Chromosome"/>
</dbReference>
<dbReference type="GO" id="GO:0005886">
    <property type="term" value="C:plasma membrane"/>
    <property type="evidence" value="ECO:0007669"/>
    <property type="project" value="UniProtKB-SubCell"/>
</dbReference>
<dbReference type="GO" id="GO:0005524">
    <property type="term" value="F:ATP binding"/>
    <property type="evidence" value="ECO:0007669"/>
    <property type="project" value="UniProtKB-UniRule"/>
</dbReference>
<dbReference type="GO" id="GO:0046933">
    <property type="term" value="F:proton-transporting ATP synthase activity, rotational mechanism"/>
    <property type="evidence" value="ECO:0007669"/>
    <property type="project" value="UniProtKB-UniRule"/>
</dbReference>
<dbReference type="GO" id="GO:0046961">
    <property type="term" value="F:proton-transporting ATPase activity, rotational mechanism"/>
    <property type="evidence" value="ECO:0007669"/>
    <property type="project" value="InterPro"/>
</dbReference>
<dbReference type="GO" id="GO:0042777">
    <property type="term" value="P:proton motive force-driven plasma membrane ATP synthesis"/>
    <property type="evidence" value="ECO:0007669"/>
    <property type="project" value="UniProtKB-UniRule"/>
</dbReference>
<dbReference type="CDD" id="cd18111">
    <property type="entry name" value="ATP-synt_V_A-type_alpha_C"/>
    <property type="match status" value="1"/>
</dbReference>
<dbReference type="CDD" id="cd01134">
    <property type="entry name" value="V_A-ATPase_A"/>
    <property type="match status" value="1"/>
</dbReference>
<dbReference type="FunFam" id="3.40.50.300:FF:000675">
    <property type="entry name" value="V-type ATP synthase alpha chain"/>
    <property type="match status" value="1"/>
</dbReference>
<dbReference type="Gene3D" id="2.40.30.20">
    <property type="match status" value="1"/>
</dbReference>
<dbReference type="Gene3D" id="2.40.50.100">
    <property type="match status" value="1"/>
</dbReference>
<dbReference type="Gene3D" id="1.10.1140.10">
    <property type="entry name" value="Bovine Mitochondrial F1-atpase, Atp Synthase Beta Chain, Chain D, domain 3"/>
    <property type="match status" value="1"/>
</dbReference>
<dbReference type="Gene3D" id="3.40.50.300">
    <property type="entry name" value="P-loop containing nucleotide triphosphate hydrolases"/>
    <property type="match status" value="1"/>
</dbReference>
<dbReference type="HAMAP" id="MF_00309">
    <property type="entry name" value="ATP_synth_A_arch"/>
    <property type="match status" value="1"/>
</dbReference>
<dbReference type="InterPro" id="IPR055190">
    <property type="entry name" value="ATP-synt_VA_C"/>
</dbReference>
<dbReference type="InterPro" id="IPR031686">
    <property type="entry name" value="ATP-synth_a_Xtn"/>
</dbReference>
<dbReference type="InterPro" id="IPR023366">
    <property type="entry name" value="ATP_synth_asu-like_sf"/>
</dbReference>
<dbReference type="InterPro" id="IPR020003">
    <property type="entry name" value="ATPase_a/bsu_AS"/>
</dbReference>
<dbReference type="InterPro" id="IPR004100">
    <property type="entry name" value="ATPase_F1/V1/A1_a/bsu_N"/>
</dbReference>
<dbReference type="InterPro" id="IPR036121">
    <property type="entry name" value="ATPase_F1/V1/A1_a/bsu_N_sf"/>
</dbReference>
<dbReference type="InterPro" id="IPR000194">
    <property type="entry name" value="ATPase_F1/V1/A1_a/bsu_nucl-bd"/>
</dbReference>
<dbReference type="InterPro" id="IPR024034">
    <property type="entry name" value="ATPase_F1/V1_b/a_C"/>
</dbReference>
<dbReference type="InterPro" id="IPR027417">
    <property type="entry name" value="P-loop_NTPase"/>
</dbReference>
<dbReference type="InterPro" id="IPR001763">
    <property type="entry name" value="Rhodanese-like_dom"/>
</dbReference>
<dbReference type="InterPro" id="IPR022878">
    <property type="entry name" value="V-ATPase_asu"/>
</dbReference>
<dbReference type="NCBIfam" id="NF003220">
    <property type="entry name" value="PRK04192.1"/>
    <property type="match status" value="1"/>
</dbReference>
<dbReference type="PANTHER" id="PTHR43607:SF1">
    <property type="entry name" value="H(+)-TRANSPORTING TWO-SECTOR ATPASE"/>
    <property type="match status" value="1"/>
</dbReference>
<dbReference type="PANTHER" id="PTHR43607">
    <property type="entry name" value="V-TYPE PROTON ATPASE CATALYTIC SUBUNIT A"/>
    <property type="match status" value="1"/>
</dbReference>
<dbReference type="Pfam" id="PF00006">
    <property type="entry name" value="ATP-synt_ab"/>
    <property type="match status" value="1"/>
</dbReference>
<dbReference type="Pfam" id="PF02874">
    <property type="entry name" value="ATP-synt_ab_N"/>
    <property type="match status" value="1"/>
</dbReference>
<dbReference type="Pfam" id="PF16886">
    <property type="entry name" value="ATP-synt_ab_Xtn"/>
    <property type="match status" value="1"/>
</dbReference>
<dbReference type="Pfam" id="PF22919">
    <property type="entry name" value="ATP-synt_VA_C"/>
    <property type="match status" value="1"/>
</dbReference>
<dbReference type="SUPFAM" id="SSF47917">
    <property type="entry name" value="C-terminal domain of alpha and beta subunits of F1 ATP synthase"/>
    <property type="match status" value="1"/>
</dbReference>
<dbReference type="SUPFAM" id="SSF50615">
    <property type="entry name" value="N-terminal domain of alpha and beta subunits of F1 ATP synthase"/>
    <property type="match status" value="1"/>
</dbReference>
<dbReference type="SUPFAM" id="SSF52540">
    <property type="entry name" value="P-loop containing nucleoside triphosphate hydrolases"/>
    <property type="match status" value="1"/>
</dbReference>
<dbReference type="PROSITE" id="PS00152">
    <property type="entry name" value="ATPASE_ALPHA_BETA"/>
    <property type="match status" value="1"/>
</dbReference>
<organism>
    <name type="scientific">Methanocorpusculum labreanum (strain ATCC 43576 / DSM 4855 / Z)</name>
    <dbReference type="NCBI Taxonomy" id="410358"/>
    <lineage>
        <taxon>Archaea</taxon>
        <taxon>Methanobacteriati</taxon>
        <taxon>Methanobacteriota</taxon>
        <taxon>Stenosarchaea group</taxon>
        <taxon>Methanomicrobia</taxon>
        <taxon>Methanomicrobiales</taxon>
        <taxon>Methanocorpusculaceae</taxon>
        <taxon>Methanocorpusculum</taxon>
    </lineage>
</organism>
<comment type="function">
    <text evidence="1">Component of the A-type ATP synthase that produces ATP from ADP in the presence of a proton gradient across the membrane. The A chain is the catalytic subunit.</text>
</comment>
<comment type="catalytic activity">
    <reaction evidence="1">
        <text>ATP + H2O + 4 H(+)(in) = ADP + phosphate + 5 H(+)(out)</text>
        <dbReference type="Rhea" id="RHEA:57720"/>
        <dbReference type="ChEBI" id="CHEBI:15377"/>
        <dbReference type="ChEBI" id="CHEBI:15378"/>
        <dbReference type="ChEBI" id="CHEBI:30616"/>
        <dbReference type="ChEBI" id="CHEBI:43474"/>
        <dbReference type="ChEBI" id="CHEBI:456216"/>
        <dbReference type="EC" id="7.1.2.2"/>
    </reaction>
</comment>
<comment type="subunit">
    <text evidence="1">Has multiple subunits with at least A(3), B(3), C, D, E, F, H, I and proteolipid K(x).</text>
</comment>
<comment type="subcellular location">
    <subcellularLocation>
        <location evidence="1">Cell membrane</location>
        <topology evidence="1">Peripheral membrane protein</topology>
    </subcellularLocation>
</comment>
<comment type="similarity">
    <text evidence="1">Belongs to the ATPase alpha/beta chains family.</text>
</comment>
<gene>
    <name evidence="1" type="primary">atpA</name>
    <name type="ordered locus">Mlab_1222</name>
</gene>
<accession>A2SST5</accession>
<sequence length="581" mass="64075">MEVNSKPGILKRIAGPVVTAVDLDAHMYDVVKVGNEELMGEVIKIDGADTVIQVYESTTGIRPGEPVINTGLSLAVELGPGLLTSIYDGIQRPLEVLIQKMGNFIARGVTAPGLDHEKKWTFKPVVHVGDNVVPGQIVGEVQETRSIVHKIMVPPLAKGGKVTKINAGDFTVDEIVIELDSGESFPMMQKWPVRVPRPYVEKHSPSIPLLTGQRILDGLFPIAKGGTAAIPGPFGSGKTVTQQQLAKWSDAEIVVYIGCGERGNEMTEVLTEFPELQDPKTGNSLMERTILIANTSNMPVAAREASVYTGITLAEYFRDMGYDVALMADSTSRWAEAMREICSRLEEMPGEEGYPAYLSSRLSEFYERAGLVEPLAGGSGSVSVIGAVSPAGGDFSEPVTQNTLRIVKVFWALDANLSRRRHFPAINWLQSYSLYMAQLNDYYDEKVSPDWNKLRSWFMEVLQKEAELQEIVQLVGSDALPETEQITIEVARMMRELFLQQNGFDPVDTYCDLPKQLDMFKMIRTYADLAYAAQAAGVPPSQILAVKAKNEMPQVKFTKDYKPVLDKIYAGMEAEFKALRA</sequence>